<sequence length="60" mass="6769">MKYSEFRRWLKAQGVEFQTGKGSHFKVSLNGKSTVFPDHGAKEMGEGLRKSIVKQLGLKD</sequence>
<dbReference type="EC" id="3.1.-.-"/>
<dbReference type="EMBL" id="CP000094">
    <property type="protein sequence ID" value="ABA72048.1"/>
    <property type="status" value="ALT_INIT"/>
    <property type="molecule type" value="Genomic_DNA"/>
</dbReference>
<dbReference type="RefSeq" id="WP_041475489.1">
    <property type="nucleotide sequence ID" value="NC_007492.2"/>
</dbReference>
<dbReference type="SMR" id="Q3KJK8"/>
<dbReference type="KEGG" id="pfo:Pfl01_0304"/>
<dbReference type="eggNOG" id="COG1724">
    <property type="taxonomic scope" value="Bacteria"/>
</dbReference>
<dbReference type="HOGENOM" id="CLU_164851_5_0_6"/>
<dbReference type="Proteomes" id="UP000002704">
    <property type="component" value="Chromosome"/>
</dbReference>
<dbReference type="GO" id="GO:0004519">
    <property type="term" value="F:endonuclease activity"/>
    <property type="evidence" value="ECO:0007669"/>
    <property type="project" value="UniProtKB-KW"/>
</dbReference>
<dbReference type="GO" id="GO:0003729">
    <property type="term" value="F:mRNA binding"/>
    <property type="evidence" value="ECO:0007669"/>
    <property type="project" value="InterPro"/>
</dbReference>
<dbReference type="Gene3D" id="3.30.920.30">
    <property type="entry name" value="Hypothetical protein"/>
    <property type="match status" value="1"/>
</dbReference>
<dbReference type="InterPro" id="IPR012933">
    <property type="entry name" value="HicA_mRNA_interferase"/>
</dbReference>
<dbReference type="InterPro" id="IPR038570">
    <property type="entry name" value="HicA_sf"/>
</dbReference>
<dbReference type="Pfam" id="PF07927">
    <property type="entry name" value="HicA_toxin"/>
    <property type="match status" value="1"/>
</dbReference>
<dbReference type="SUPFAM" id="SSF54786">
    <property type="entry name" value="YcfA/nrd intein domain"/>
    <property type="match status" value="1"/>
</dbReference>
<keyword id="KW-0255">Endonuclease</keyword>
<keyword id="KW-0378">Hydrolase</keyword>
<keyword id="KW-0540">Nuclease</keyword>
<keyword id="KW-0694">RNA-binding</keyword>
<keyword id="KW-0346">Stress response</keyword>
<keyword id="KW-1277">Toxin-antitoxin system</keyword>
<evidence type="ECO:0000250" key="1"/>
<evidence type="ECO:0000305" key="2"/>
<feature type="chain" id="PRO_0000259911" description="Probable mRNA interferase HicA">
    <location>
        <begin position="1"/>
        <end position="60"/>
    </location>
</feature>
<comment type="function">
    <text evidence="1">Toxic component of a type II toxin-antitoxin (TA) system. A probable translation-independent mRNA interferase (By similarity).</text>
</comment>
<comment type="subunit">
    <text evidence="1">Probably forms a complex with the antitoxin HicB 1 which inhibits the mRNA interferase activity.</text>
</comment>
<comment type="similarity">
    <text evidence="2">Belongs to the HicA mRNA interferase family.</text>
</comment>
<comment type="sequence caution" evidence="2">
    <conflict type="erroneous initiation">
        <sequence resource="EMBL-CDS" id="ABA72048"/>
    </conflict>
    <text>Extended N-terminus.</text>
</comment>
<accession>Q3KJK8</accession>
<reference key="1">
    <citation type="journal article" date="2009" name="Genome Biol.">
        <title>Genomic and genetic analyses of diversity and plant interactions of Pseudomonas fluorescens.</title>
        <authorList>
            <person name="Silby M.W."/>
            <person name="Cerdeno-Tarraga A.M."/>
            <person name="Vernikos G.S."/>
            <person name="Giddens S.R."/>
            <person name="Jackson R.W."/>
            <person name="Preston G.M."/>
            <person name="Zhang X.-X."/>
            <person name="Moon C.D."/>
            <person name="Gehrig S.M."/>
            <person name="Godfrey S.A.C."/>
            <person name="Knight C.G."/>
            <person name="Malone J.G."/>
            <person name="Robinson Z."/>
            <person name="Spiers A.J."/>
            <person name="Harris S."/>
            <person name="Challis G.L."/>
            <person name="Yaxley A.M."/>
            <person name="Harris D."/>
            <person name="Seeger K."/>
            <person name="Murphy L."/>
            <person name="Rutter S."/>
            <person name="Squares R."/>
            <person name="Quail M.A."/>
            <person name="Saunders E."/>
            <person name="Mavromatis K."/>
            <person name="Brettin T.S."/>
            <person name="Bentley S.D."/>
            <person name="Hothersall J."/>
            <person name="Stephens E."/>
            <person name="Thomas C.M."/>
            <person name="Parkhill J."/>
            <person name="Levy S.B."/>
            <person name="Rainey P.B."/>
            <person name="Thomson N.R."/>
        </authorList>
    </citation>
    <scope>NUCLEOTIDE SEQUENCE [LARGE SCALE GENOMIC DNA]</scope>
    <source>
        <strain>Pf0-1</strain>
    </source>
</reference>
<protein>
    <recommendedName>
        <fullName>Probable mRNA interferase HicA</fullName>
        <ecNumber>3.1.-.-</ecNumber>
    </recommendedName>
    <alternativeName>
        <fullName>Endoribonuclease HicA</fullName>
    </alternativeName>
    <alternativeName>
        <fullName>Toxin HicA</fullName>
    </alternativeName>
</protein>
<proteinExistence type="inferred from homology"/>
<name>HICA_PSEPF</name>
<organism>
    <name type="scientific">Pseudomonas fluorescens (strain Pf0-1)</name>
    <dbReference type="NCBI Taxonomy" id="205922"/>
    <lineage>
        <taxon>Bacteria</taxon>
        <taxon>Pseudomonadati</taxon>
        <taxon>Pseudomonadota</taxon>
        <taxon>Gammaproteobacteria</taxon>
        <taxon>Pseudomonadales</taxon>
        <taxon>Pseudomonadaceae</taxon>
        <taxon>Pseudomonas</taxon>
    </lineage>
</organism>
<gene>
    <name type="primary">hicA</name>
    <name type="ordered locus">Pfl01_0304</name>
</gene>